<name>Y2936_BACLD</name>
<evidence type="ECO:0000255" key="1">
    <source>
        <dbReference type="HAMAP-Rule" id="MF_00363"/>
    </source>
</evidence>
<keyword id="KW-1003">Cell membrane</keyword>
<keyword id="KW-0472">Membrane</keyword>
<keyword id="KW-1185">Reference proteome</keyword>
<keyword id="KW-0812">Transmembrane</keyword>
<keyword id="KW-1133">Transmembrane helix</keyword>
<sequence length="72" mass="8369">MDLWVVILVGVLALLAGVALGFFIARKYMMNYLKKNPPINEQMLRMMMMQMGMKPSQKKINQMMKAMENQTK</sequence>
<gene>
    <name type="ordered locus">BLi02038</name>
    <name type="ordered locus">BL02936</name>
</gene>
<dbReference type="EMBL" id="CP000002">
    <property type="protein sequence ID" value="AAU23566.1"/>
    <property type="molecule type" value="Genomic_DNA"/>
</dbReference>
<dbReference type="EMBL" id="AE017333">
    <property type="protein sequence ID" value="AAU40928.1"/>
    <property type="molecule type" value="Genomic_DNA"/>
</dbReference>
<dbReference type="RefSeq" id="WP_003182236.1">
    <property type="nucleotide sequence ID" value="NC_006322.1"/>
</dbReference>
<dbReference type="SMR" id="Q65J36"/>
<dbReference type="STRING" id="279010.BL02936"/>
<dbReference type="KEGG" id="bld:BLi02038"/>
<dbReference type="KEGG" id="bli:BL02936"/>
<dbReference type="eggNOG" id="COG3763">
    <property type="taxonomic scope" value="Bacteria"/>
</dbReference>
<dbReference type="HOGENOM" id="CLU_180108_0_1_9"/>
<dbReference type="Proteomes" id="UP000000606">
    <property type="component" value="Chromosome"/>
</dbReference>
<dbReference type="GO" id="GO:0005886">
    <property type="term" value="C:plasma membrane"/>
    <property type="evidence" value="ECO:0007669"/>
    <property type="project" value="UniProtKB-SubCell"/>
</dbReference>
<dbReference type="HAMAP" id="MF_00363">
    <property type="entry name" value="UPF0154"/>
    <property type="match status" value="1"/>
</dbReference>
<dbReference type="InterPro" id="IPR005359">
    <property type="entry name" value="UPF0154"/>
</dbReference>
<dbReference type="NCBIfam" id="NF002503">
    <property type="entry name" value="PRK01844.1"/>
    <property type="match status" value="1"/>
</dbReference>
<dbReference type="Pfam" id="PF03672">
    <property type="entry name" value="UPF0154"/>
    <property type="match status" value="1"/>
</dbReference>
<proteinExistence type="inferred from homology"/>
<reference key="1">
    <citation type="journal article" date="2004" name="J. Mol. Microbiol. Biotechnol.">
        <title>The complete genome sequence of Bacillus licheniformis DSM13, an organism with great industrial potential.</title>
        <authorList>
            <person name="Veith B."/>
            <person name="Herzberg C."/>
            <person name="Steckel S."/>
            <person name="Feesche J."/>
            <person name="Maurer K.H."/>
            <person name="Ehrenreich P."/>
            <person name="Baeumer S."/>
            <person name="Henne A."/>
            <person name="Liesegang H."/>
            <person name="Merkl R."/>
            <person name="Ehrenreich A."/>
            <person name="Gottschalk G."/>
        </authorList>
    </citation>
    <scope>NUCLEOTIDE SEQUENCE [LARGE SCALE GENOMIC DNA]</scope>
    <source>
        <strain>ATCC 14580 / DSM 13 / JCM 2505 / CCUG 7422 / NBRC 12200 / NCIMB 9375 / NCTC 10341 / NRRL NRS-1264 / Gibson 46</strain>
    </source>
</reference>
<reference key="2">
    <citation type="journal article" date="2004" name="Genome Biol.">
        <title>Complete genome sequence of the industrial bacterium Bacillus licheniformis and comparisons with closely related Bacillus species.</title>
        <authorList>
            <person name="Rey M.W."/>
            <person name="Ramaiya P."/>
            <person name="Nelson B.A."/>
            <person name="Brody-Karpin S.D."/>
            <person name="Zaretsky E.J."/>
            <person name="Tang M."/>
            <person name="Lopez de Leon A."/>
            <person name="Xiang H."/>
            <person name="Gusti V."/>
            <person name="Clausen I.G."/>
            <person name="Olsen P.B."/>
            <person name="Rasmussen M.D."/>
            <person name="Andersen J.T."/>
            <person name="Joergensen P.L."/>
            <person name="Larsen T.S."/>
            <person name="Sorokin A."/>
            <person name="Bolotin A."/>
            <person name="Lapidus A."/>
            <person name="Galleron N."/>
            <person name="Ehrlich S.D."/>
            <person name="Berka R.M."/>
        </authorList>
    </citation>
    <scope>NUCLEOTIDE SEQUENCE [LARGE SCALE GENOMIC DNA]</scope>
    <source>
        <strain>ATCC 14580 / DSM 13 / JCM 2505 / CCUG 7422 / NBRC 12200 / NCIMB 9375 / NCTC 10341 / NRRL NRS-1264 / Gibson 46</strain>
    </source>
</reference>
<feature type="chain" id="PRO_1000005625" description="UPF0154 protein BLi02038/BL02936">
    <location>
        <begin position="1"/>
        <end position="72"/>
    </location>
</feature>
<feature type="transmembrane region" description="Helical" evidence="1">
    <location>
        <begin position="4"/>
        <end position="24"/>
    </location>
</feature>
<comment type="subcellular location">
    <subcellularLocation>
        <location evidence="1">Cell membrane</location>
        <topology evidence="1">Single-pass membrane protein</topology>
    </subcellularLocation>
</comment>
<comment type="similarity">
    <text evidence="1">Belongs to the UPF0154 family.</text>
</comment>
<organism>
    <name type="scientific">Bacillus licheniformis (strain ATCC 14580 / DSM 13 / JCM 2505 / CCUG 7422 / NBRC 12200 / NCIMB 9375 / NCTC 10341 / NRRL NRS-1264 / Gibson 46)</name>
    <dbReference type="NCBI Taxonomy" id="279010"/>
    <lineage>
        <taxon>Bacteria</taxon>
        <taxon>Bacillati</taxon>
        <taxon>Bacillota</taxon>
        <taxon>Bacilli</taxon>
        <taxon>Bacillales</taxon>
        <taxon>Bacillaceae</taxon>
        <taxon>Bacillus</taxon>
    </lineage>
</organism>
<accession>Q65J36</accession>
<accession>Q62UJ3</accession>
<protein>
    <recommendedName>
        <fullName evidence="1">UPF0154 protein BLi02038/BL02936</fullName>
    </recommendedName>
</protein>